<keyword id="KW-0963">Cytoplasm</keyword>
<keyword id="KW-0489">Methyltransferase</keyword>
<keyword id="KW-0698">rRNA processing</keyword>
<keyword id="KW-0949">S-adenosyl-L-methionine</keyword>
<keyword id="KW-0808">Transferase</keyword>
<evidence type="ECO:0000255" key="1">
    <source>
        <dbReference type="HAMAP-Rule" id="MF_01848"/>
    </source>
</evidence>
<evidence type="ECO:0000305" key="2"/>
<comment type="function">
    <text evidence="1">Specifically methylates the adenine in position 1618 of 23S rRNA.</text>
</comment>
<comment type="catalytic activity">
    <reaction evidence="1">
        <text>adenosine(1618) in 23S rRNA + S-adenosyl-L-methionine = N(6)-methyladenosine(1618) in 23S rRNA + S-adenosyl-L-homocysteine + H(+)</text>
        <dbReference type="Rhea" id="RHEA:16497"/>
        <dbReference type="Rhea" id="RHEA-COMP:10229"/>
        <dbReference type="Rhea" id="RHEA-COMP:10231"/>
        <dbReference type="ChEBI" id="CHEBI:15378"/>
        <dbReference type="ChEBI" id="CHEBI:57856"/>
        <dbReference type="ChEBI" id="CHEBI:59789"/>
        <dbReference type="ChEBI" id="CHEBI:74411"/>
        <dbReference type="ChEBI" id="CHEBI:74449"/>
        <dbReference type="EC" id="2.1.1.181"/>
    </reaction>
</comment>
<comment type="subcellular location">
    <subcellularLocation>
        <location evidence="1">Cytoplasm</location>
    </subcellularLocation>
</comment>
<comment type="similarity">
    <text evidence="1">Belongs to the methyltransferase superfamily. METTL16/RlmF family.</text>
</comment>
<comment type="sequence caution" evidence="2">
    <conflict type="erroneous initiation">
        <sequence resource="EMBL-CDS" id="ABF03022"/>
    </conflict>
</comment>
<reference key="1">
    <citation type="journal article" date="2006" name="BMC Genomics">
        <title>Complete genome sequence of Shigella flexneri 5b and comparison with Shigella flexneri 2a.</title>
        <authorList>
            <person name="Nie H."/>
            <person name="Yang F."/>
            <person name="Zhang X."/>
            <person name="Yang J."/>
            <person name="Chen L."/>
            <person name="Wang J."/>
            <person name="Xiong Z."/>
            <person name="Peng J."/>
            <person name="Sun L."/>
            <person name="Dong J."/>
            <person name="Xue Y."/>
            <person name="Xu X."/>
            <person name="Chen S."/>
            <person name="Yao Z."/>
            <person name="Shen Y."/>
            <person name="Jin Q."/>
        </authorList>
    </citation>
    <scope>NUCLEOTIDE SEQUENCE [LARGE SCALE GENOMIC DNA]</scope>
    <source>
        <strain>8401</strain>
    </source>
</reference>
<gene>
    <name evidence="1" type="primary">rlmF</name>
    <name type="ordered locus">SFV_0791</name>
</gene>
<protein>
    <recommendedName>
        <fullName evidence="1">Ribosomal RNA large subunit methyltransferase F</fullName>
        <ecNumber evidence="1">2.1.1.181</ecNumber>
    </recommendedName>
    <alternativeName>
        <fullName evidence="1">23S rRNA mA1618 methyltransferase</fullName>
    </alternativeName>
    <alternativeName>
        <fullName evidence="1">rRNA adenine N-6-methyltransferase</fullName>
    </alternativeName>
</protein>
<accession>Q0T6F4</accession>
<name>RLMF_SHIF8</name>
<dbReference type="EC" id="2.1.1.181" evidence="1"/>
<dbReference type="EMBL" id="CP000266">
    <property type="protein sequence ID" value="ABF03022.1"/>
    <property type="status" value="ALT_INIT"/>
    <property type="molecule type" value="Genomic_DNA"/>
</dbReference>
<dbReference type="RefSeq" id="WP_001343936.1">
    <property type="nucleotide sequence ID" value="NC_008258.1"/>
</dbReference>
<dbReference type="SMR" id="Q0T6F4"/>
<dbReference type="KEGG" id="sfv:SFV_0791"/>
<dbReference type="HOGENOM" id="CLU_027534_3_0_6"/>
<dbReference type="Proteomes" id="UP000000659">
    <property type="component" value="Chromosome"/>
</dbReference>
<dbReference type="GO" id="GO:0005737">
    <property type="term" value="C:cytoplasm"/>
    <property type="evidence" value="ECO:0007669"/>
    <property type="project" value="UniProtKB-SubCell"/>
</dbReference>
<dbReference type="GO" id="GO:0052907">
    <property type="term" value="F:23S rRNA (adenine(1618)-N(6))-methyltransferase activity"/>
    <property type="evidence" value="ECO:0007669"/>
    <property type="project" value="UniProtKB-EC"/>
</dbReference>
<dbReference type="GO" id="GO:0070475">
    <property type="term" value="P:rRNA base methylation"/>
    <property type="evidence" value="ECO:0007669"/>
    <property type="project" value="TreeGrafter"/>
</dbReference>
<dbReference type="FunFam" id="3.40.50.150:FF:000045">
    <property type="entry name" value="Ribosomal RNA large subunit methyltransferase F"/>
    <property type="match status" value="1"/>
</dbReference>
<dbReference type="Gene3D" id="3.40.50.150">
    <property type="entry name" value="Vaccinia Virus protein VP39"/>
    <property type="match status" value="1"/>
</dbReference>
<dbReference type="HAMAP" id="MF_01848">
    <property type="entry name" value="23SrRNA_methyltr_F"/>
    <property type="match status" value="1"/>
</dbReference>
<dbReference type="InterPro" id="IPR010286">
    <property type="entry name" value="METTL16/RlmF"/>
</dbReference>
<dbReference type="InterPro" id="IPR016909">
    <property type="entry name" value="rRNA_lsu_MeTfrase_F"/>
</dbReference>
<dbReference type="InterPro" id="IPR029063">
    <property type="entry name" value="SAM-dependent_MTases_sf"/>
</dbReference>
<dbReference type="NCBIfam" id="NF008725">
    <property type="entry name" value="PRK11727.1"/>
    <property type="match status" value="1"/>
</dbReference>
<dbReference type="PANTHER" id="PTHR13393:SF0">
    <property type="entry name" value="RNA N6-ADENOSINE-METHYLTRANSFERASE METTL16"/>
    <property type="match status" value="1"/>
</dbReference>
<dbReference type="PANTHER" id="PTHR13393">
    <property type="entry name" value="SAM-DEPENDENT METHYLTRANSFERASE"/>
    <property type="match status" value="1"/>
</dbReference>
<dbReference type="Pfam" id="PF05971">
    <property type="entry name" value="Methyltransf_10"/>
    <property type="match status" value="1"/>
</dbReference>
<dbReference type="PIRSF" id="PIRSF029038">
    <property type="entry name" value="Mtase_YbiN_prd"/>
    <property type="match status" value="1"/>
</dbReference>
<dbReference type="SUPFAM" id="SSF53335">
    <property type="entry name" value="S-adenosyl-L-methionine-dependent methyltransferases"/>
    <property type="match status" value="1"/>
</dbReference>
<feature type="chain" id="PRO_0000349971" description="Ribosomal RNA large subunit methyltransferase F">
    <location>
        <begin position="1"/>
        <end position="308"/>
    </location>
</feature>
<sequence>MSAQKPGLHPRNRHHSRYDLATLCQVNPELRQFLTLTPAGEQSVDFANPLAVKALNKALLAHFYAVANWDIPDGFLCPPVPGRADYIHHLADLLAEASGTIPANASILDIGVGANCIYPLIGVHEYGWRFTGSETSSQALSSAQAIISANPGLNRAIRLRRQKESGAIFNGIIHKNEQYDATLCNPPFHDSAAAARAGSERKRRNLGLNKDDALNFGGQQQELWCEGGEVNFIKKMIEESKGFAKQVMWFTSLVSRGENLPPLYRALTDVGAVKVVKKEMAQGQKQSRFIAWTFMNDEQRRRFVNRQR</sequence>
<organism>
    <name type="scientific">Shigella flexneri serotype 5b (strain 8401)</name>
    <dbReference type="NCBI Taxonomy" id="373384"/>
    <lineage>
        <taxon>Bacteria</taxon>
        <taxon>Pseudomonadati</taxon>
        <taxon>Pseudomonadota</taxon>
        <taxon>Gammaproteobacteria</taxon>
        <taxon>Enterobacterales</taxon>
        <taxon>Enterobacteriaceae</taxon>
        <taxon>Shigella</taxon>
    </lineage>
</organism>
<proteinExistence type="inferred from homology"/>